<feature type="chain" id="PRO_0000090305" description="Triosephosphate isomerase">
    <location>
        <begin position="1"/>
        <end position="243"/>
    </location>
</feature>
<feature type="active site" description="Electrophile" evidence="1">
    <location>
        <position position="96"/>
    </location>
</feature>
<feature type="active site" description="Proton acceptor" evidence="1">
    <location>
        <position position="165"/>
    </location>
</feature>
<feature type="binding site" evidence="1">
    <location>
        <begin position="9"/>
        <end position="11"/>
    </location>
    <ligand>
        <name>substrate</name>
    </ligand>
</feature>
<feature type="binding site" evidence="1">
    <location>
        <position position="171"/>
    </location>
    <ligand>
        <name>substrate</name>
    </ligand>
</feature>
<feature type="binding site" evidence="1">
    <location>
        <position position="204"/>
    </location>
    <ligand>
        <name>substrate</name>
    </ligand>
</feature>
<feature type="binding site" evidence="1">
    <location>
        <begin position="225"/>
        <end position="226"/>
    </location>
    <ligand>
        <name>substrate</name>
    </ligand>
</feature>
<protein>
    <recommendedName>
        <fullName evidence="1">Triosephosphate isomerase</fullName>
        <shortName evidence="1">TIM</shortName>
        <shortName evidence="1">TPI</shortName>
        <ecNumber evidence="1">5.3.1.1</ecNumber>
    </recommendedName>
    <alternativeName>
        <fullName evidence="1">Triose-phosphate isomerase</fullName>
    </alternativeName>
</protein>
<organism>
    <name type="scientific">Parasynechococcus marenigrum (strain WH8102)</name>
    <dbReference type="NCBI Taxonomy" id="84588"/>
    <lineage>
        <taxon>Bacteria</taxon>
        <taxon>Bacillati</taxon>
        <taxon>Cyanobacteriota</taxon>
        <taxon>Cyanophyceae</taxon>
        <taxon>Synechococcales</taxon>
        <taxon>Prochlorococcaceae</taxon>
        <taxon>Parasynechococcus</taxon>
        <taxon>Parasynechococcus marenigrum</taxon>
    </lineage>
</organism>
<comment type="function">
    <text evidence="1">Involved in the gluconeogenesis. Catalyzes stereospecifically the conversion of dihydroxyacetone phosphate (DHAP) to D-glyceraldehyde-3-phosphate (G3P).</text>
</comment>
<comment type="catalytic activity">
    <reaction evidence="1">
        <text>D-glyceraldehyde 3-phosphate = dihydroxyacetone phosphate</text>
        <dbReference type="Rhea" id="RHEA:18585"/>
        <dbReference type="ChEBI" id="CHEBI:57642"/>
        <dbReference type="ChEBI" id="CHEBI:59776"/>
        <dbReference type="EC" id="5.3.1.1"/>
    </reaction>
</comment>
<comment type="pathway">
    <text evidence="1">Carbohydrate biosynthesis; gluconeogenesis.</text>
</comment>
<comment type="pathway">
    <text evidence="1">Carbohydrate degradation; glycolysis; D-glyceraldehyde 3-phosphate from glycerone phosphate: step 1/1.</text>
</comment>
<comment type="subunit">
    <text evidence="1">Homodimer.</text>
</comment>
<comment type="subcellular location">
    <subcellularLocation>
        <location evidence="1">Cytoplasm</location>
    </subcellularLocation>
</comment>
<comment type="similarity">
    <text evidence="1">Belongs to the triosephosphate isomerase family.</text>
</comment>
<proteinExistence type="inferred from homology"/>
<evidence type="ECO:0000255" key="1">
    <source>
        <dbReference type="HAMAP-Rule" id="MF_00147"/>
    </source>
</evidence>
<keyword id="KW-0963">Cytoplasm</keyword>
<keyword id="KW-0312">Gluconeogenesis</keyword>
<keyword id="KW-0324">Glycolysis</keyword>
<keyword id="KW-0413">Isomerase</keyword>
<name>TPIS_PARMW</name>
<sequence>MRRPVIAGNWKMHMTCAQARDYMAAFLPQIERAPQDREIVLAPPFTALSTMAAAAEHSVVGLASQNVHWQDHGAFTAEISAEMLLEHGVAYTIVGHSEPRKYFSESDEQINHRARCSQAKGLIPIVCVGESDEQRERGEAERVIRRQIEQGLEGLDANKLVVAYEPIWAIGTGKTCEAAEANRICGLIRSWVGATDLIIQYGGSVKPTNIDELMAMSDIDGVLVGGASLKPDSFARIANYQAI</sequence>
<reference key="1">
    <citation type="journal article" date="2003" name="Nature">
        <title>The genome of a motile marine Synechococcus.</title>
        <authorList>
            <person name="Palenik B."/>
            <person name="Brahamsha B."/>
            <person name="Larimer F.W."/>
            <person name="Land M.L."/>
            <person name="Hauser L."/>
            <person name="Chain P."/>
            <person name="Lamerdin J.E."/>
            <person name="Regala W."/>
            <person name="Allen E.E."/>
            <person name="McCarren J."/>
            <person name="Paulsen I.T."/>
            <person name="Dufresne A."/>
            <person name="Partensky F."/>
            <person name="Webb E.A."/>
            <person name="Waterbury J."/>
        </authorList>
    </citation>
    <scope>NUCLEOTIDE SEQUENCE [LARGE SCALE GENOMIC DNA]</scope>
    <source>
        <strain>WH8102</strain>
    </source>
</reference>
<accession>Q7U804</accession>
<dbReference type="EC" id="5.3.1.1" evidence="1"/>
<dbReference type="EMBL" id="BX569691">
    <property type="protein sequence ID" value="CAE07338.1"/>
    <property type="molecule type" value="Genomic_DNA"/>
</dbReference>
<dbReference type="RefSeq" id="WP_011127688.1">
    <property type="nucleotide sequence ID" value="NC_005070.1"/>
</dbReference>
<dbReference type="SMR" id="Q7U804"/>
<dbReference type="STRING" id="84588.SYNW0823"/>
<dbReference type="KEGG" id="syw:SYNW0823"/>
<dbReference type="eggNOG" id="COG0149">
    <property type="taxonomic scope" value="Bacteria"/>
</dbReference>
<dbReference type="HOGENOM" id="CLU_024251_2_3_3"/>
<dbReference type="UniPathway" id="UPA00109">
    <property type="reaction ID" value="UER00189"/>
</dbReference>
<dbReference type="UniPathway" id="UPA00138"/>
<dbReference type="Proteomes" id="UP000001422">
    <property type="component" value="Chromosome"/>
</dbReference>
<dbReference type="GO" id="GO:0005829">
    <property type="term" value="C:cytosol"/>
    <property type="evidence" value="ECO:0007669"/>
    <property type="project" value="TreeGrafter"/>
</dbReference>
<dbReference type="GO" id="GO:0004807">
    <property type="term" value="F:triose-phosphate isomerase activity"/>
    <property type="evidence" value="ECO:0007669"/>
    <property type="project" value="UniProtKB-UniRule"/>
</dbReference>
<dbReference type="GO" id="GO:0006094">
    <property type="term" value="P:gluconeogenesis"/>
    <property type="evidence" value="ECO:0007669"/>
    <property type="project" value="UniProtKB-UniRule"/>
</dbReference>
<dbReference type="GO" id="GO:0046166">
    <property type="term" value="P:glyceraldehyde-3-phosphate biosynthetic process"/>
    <property type="evidence" value="ECO:0007669"/>
    <property type="project" value="TreeGrafter"/>
</dbReference>
<dbReference type="GO" id="GO:0019563">
    <property type="term" value="P:glycerol catabolic process"/>
    <property type="evidence" value="ECO:0007669"/>
    <property type="project" value="TreeGrafter"/>
</dbReference>
<dbReference type="GO" id="GO:0006096">
    <property type="term" value="P:glycolytic process"/>
    <property type="evidence" value="ECO:0007669"/>
    <property type="project" value="UniProtKB-UniRule"/>
</dbReference>
<dbReference type="CDD" id="cd00311">
    <property type="entry name" value="TIM"/>
    <property type="match status" value="1"/>
</dbReference>
<dbReference type="FunFam" id="3.20.20.70:FF:000016">
    <property type="entry name" value="Triosephosphate isomerase"/>
    <property type="match status" value="1"/>
</dbReference>
<dbReference type="Gene3D" id="3.20.20.70">
    <property type="entry name" value="Aldolase class I"/>
    <property type="match status" value="1"/>
</dbReference>
<dbReference type="HAMAP" id="MF_00147_B">
    <property type="entry name" value="TIM_B"/>
    <property type="match status" value="1"/>
</dbReference>
<dbReference type="InterPro" id="IPR013785">
    <property type="entry name" value="Aldolase_TIM"/>
</dbReference>
<dbReference type="InterPro" id="IPR035990">
    <property type="entry name" value="TIM_sf"/>
</dbReference>
<dbReference type="InterPro" id="IPR022896">
    <property type="entry name" value="TrioseP_Isoase_bac/euk"/>
</dbReference>
<dbReference type="InterPro" id="IPR000652">
    <property type="entry name" value="Triosephosphate_isomerase"/>
</dbReference>
<dbReference type="InterPro" id="IPR020861">
    <property type="entry name" value="Triosephosphate_isomerase_AS"/>
</dbReference>
<dbReference type="NCBIfam" id="TIGR00419">
    <property type="entry name" value="tim"/>
    <property type="match status" value="1"/>
</dbReference>
<dbReference type="PANTHER" id="PTHR21139">
    <property type="entry name" value="TRIOSEPHOSPHATE ISOMERASE"/>
    <property type="match status" value="1"/>
</dbReference>
<dbReference type="PANTHER" id="PTHR21139:SF42">
    <property type="entry name" value="TRIOSEPHOSPHATE ISOMERASE"/>
    <property type="match status" value="1"/>
</dbReference>
<dbReference type="Pfam" id="PF00121">
    <property type="entry name" value="TIM"/>
    <property type="match status" value="1"/>
</dbReference>
<dbReference type="SUPFAM" id="SSF51351">
    <property type="entry name" value="Triosephosphate isomerase (TIM)"/>
    <property type="match status" value="1"/>
</dbReference>
<dbReference type="PROSITE" id="PS00171">
    <property type="entry name" value="TIM_1"/>
    <property type="match status" value="1"/>
</dbReference>
<dbReference type="PROSITE" id="PS51440">
    <property type="entry name" value="TIM_2"/>
    <property type="match status" value="1"/>
</dbReference>
<gene>
    <name evidence="1" type="primary">tpiA</name>
    <name type="synonym">tpi</name>
    <name type="ordered locus">SYNW0823</name>
</gene>